<name>RL31_PANGI</name>
<comment type="similarity">
    <text evidence="1">Belongs to the eukaryotic ribosomal protein eL31 family.</text>
</comment>
<protein>
    <recommendedName>
        <fullName evidence="1">Large ribosomal subunit protein eL31</fullName>
    </recommendedName>
    <alternativeName>
        <fullName>60S ribosomal protein L31</fullName>
    </alternativeName>
</protein>
<gene>
    <name type="primary">RPL31</name>
</gene>
<organism>
    <name type="scientific">Panax ginseng</name>
    <name type="common">Korean ginseng</name>
    <dbReference type="NCBI Taxonomy" id="4054"/>
    <lineage>
        <taxon>Eukaryota</taxon>
        <taxon>Viridiplantae</taxon>
        <taxon>Streptophyta</taxon>
        <taxon>Embryophyta</taxon>
        <taxon>Tracheophyta</taxon>
        <taxon>Spermatophyta</taxon>
        <taxon>Magnoliopsida</taxon>
        <taxon>eudicotyledons</taxon>
        <taxon>Gunneridae</taxon>
        <taxon>Pentapetalae</taxon>
        <taxon>asterids</taxon>
        <taxon>campanulids</taxon>
        <taxon>Apiales</taxon>
        <taxon>Araliaceae</taxon>
        <taxon>Panax</taxon>
    </lineage>
</organism>
<sequence length="121" mass="13967">MVEKTKGRKEEVVTREYTINLHKRLHGCTFKKKAPNAIKEIRKFAQKAMGTKDVRVDVKLNKQIWSRGIRSVPRRVRVRIARKRNDDEDAKEELYSLVTVAKIPAGTLKGLGPQIIEEDDE</sequence>
<reference key="1">
    <citation type="submission" date="2000-05" db="EMBL/GenBank/DDBJ databases">
        <authorList>
            <person name="In J.G."/>
            <person name="Yang D.C."/>
        </authorList>
    </citation>
    <scope>NUCLEOTIDE SEQUENCE [MRNA]</scope>
    <source>
        <tissue>Root</tissue>
    </source>
</reference>
<feature type="chain" id="PRO_0000153781" description="Large ribosomal subunit protein eL31">
    <location>
        <begin position="1"/>
        <end position="121"/>
    </location>
</feature>
<proteinExistence type="evidence at transcript level"/>
<dbReference type="EMBL" id="AB043976">
    <property type="protein sequence ID" value="BAA96368.1"/>
    <property type="molecule type" value="mRNA"/>
</dbReference>
<dbReference type="SMR" id="Q9MAV7"/>
<dbReference type="GO" id="GO:0022625">
    <property type="term" value="C:cytosolic large ribosomal subunit"/>
    <property type="evidence" value="ECO:0007669"/>
    <property type="project" value="TreeGrafter"/>
</dbReference>
<dbReference type="GO" id="GO:0003735">
    <property type="term" value="F:structural constituent of ribosome"/>
    <property type="evidence" value="ECO:0007669"/>
    <property type="project" value="InterPro"/>
</dbReference>
<dbReference type="GO" id="GO:0002181">
    <property type="term" value="P:cytoplasmic translation"/>
    <property type="evidence" value="ECO:0007669"/>
    <property type="project" value="TreeGrafter"/>
</dbReference>
<dbReference type="CDD" id="cd00463">
    <property type="entry name" value="Ribosomal_L31e"/>
    <property type="match status" value="1"/>
</dbReference>
<dbReference type="FunFam" id="3.10.440.10:FF:000001">
    <property type="entry name" value="60S ribosomal protein L31"/>
    <property type="match status" value="1"/>
</dbReference>
<dbReference type="Gene3D" id="3.10.440.10">
    <property type="match status" value="1"/>
</dbReference>
<dbReference type="InterPro" id="IPR000054">
    <property type="entry name" value="Ribosomal_eL31"/>
</dbReference>
<dbReference type="InterPro" id="IPR020052">
    <property type="entry name" value="Ribosomal_eL31_CS"/>
</dbReference>
<dbReference type="InterPro" id="IPR023621">
    <property type="entry name" value="Ribosomal_eL31_dom_sf"/>
</dbReference>
<dbReference type="NCBIfam" id="NF002258">
    <property type="entry name" value="PRK01192.1-1"/>
    <property type="match status" value="1"/>
</dbReference>
<dbReference type="PANTHER" id="PTHR10956">
    <property type="entry name" value="60S RIBOSOMAL PROTEIN L31"/>
    <property type="match status" value="1"/>
</dbReference>
<dbReference type="PANTHER" id="PTHR10956:SF52">
    <property type="entry name" value="LARGE RIBOSOMAL SUBUNIT PROTEIN EL31X-RELATED"/>
    <property type="match status" value="1"/>
</dbReference>
<dbReference type="Pfam" id="PF01198">
    <property type="entry name" value="Ribosomal_L31e"/>
    <property type="match status" value="1"/>
</dbReference>
<dbReference type="SMART" id="SM01380">
    <property type="entry name" value="Ribosomal_L31e"/>
    <property type="match status" value="1"/>
</dbReference>
<dbReference type="SUPFAM" id="SSF54575">
    <property type="entry name" value="Ribosomal protein L31e"/>
    <property type="match status" value="1"/>
</dbReference>
<dbReference type="PROSITE" id="PS01144">
    <property type="entry name" value="RIBOSOMAL_L31E"/>
    <property type="match status" value="1"/>
</dbReference>
<keyword id="KW-0687">Ribonucleoprotein</keyword>
<keyword id="KW-0689">Ribosomal protein</keyword>
<evidence type="ECO:0000305" key="1"/>
<accession>Q9MAV7</accession>